<sequence>MDLQAQLEELKTKTQEALKQLNGDHSKELQELRVAVLGKKGTLTELLKGLKDLSNDLRPVVGKQVNELRDFLTQAFEEQAKVVEAAKIQAKLDSESIDVTLPGRQMKQGYRHVLTQISEEIEDIFLGMGFQIVDGFEVEKDYYNFERMNLPKDHPARDMQDTFYITEDILLRTHTSPVQARTLDQHDFSKGPLKMISPGRVFRRDTDDATHSHQFHQIEGLVVGKSISMGDLKGTLEMIIKKMFGKERKIRLRPSYFPFTEPSVEVDVSCFKCGGKGCNVCKKTGWIEILGAGMVHPSVLEMSGVNAQEYSGFAFGLGQERIAMLRYGINDIRGFYQGDSRFSKQFK</sequence>
<accession>C0MH11</accession>
<gene>
    <name evidence="1" type="primary">pheS</name>
    <name type="ordered locus">SZO_11570</name>
</gene>
<proteinExistence type="inferred from homology"/>
<reference key="1">
    <citation type="journal article" date="2009" name="PLoS Pathog.">
        <title>Genomic evidence for the evolution of Streptococcus equi: host restriction, increased virulence, and genetic exchange with human pathogens.</title>
        <authorList>
            <person name="Holden M.T.G."/>
            <person name="Heather Z."/>
            <person name="Paillot R."/>
            <person name="Steward K.F."/>
            <person name="Webb K."/>
            <person name="Ainslie F."/>
            <person name="Jourdan T."/>
            <person name="Bason N.C."/>
            <person name="Holroyd N.E."/>
            <person name="Mungall K."/>
            <person name="Quail M.A."/>
            <person name="Sanders M."/>
            <person name="Simmonds M."/>
            <person name="Willey D."/>
            <person name="Brooks K."/>
            <person name="Aanensen D.M."/>
            <person name="Spratt B.G."/>
            <person name="Jolley K.A."/>
            <person name="Maiden M.C.J."/>
            <person name="Kehoe M."/>
            <person name="Chanter N."/>
            <person name="Bentley S.D."/>
            <person name="Robinson C."/>
            <person name="Maskell D.J."/>
            <person name="Parkhill J."/>
            <person name="Waller A.S."/>
        </authorList>
    </citation>
    <scope>NUCLEOTIDE SEQUENCE [LARGE SCALE GENOMIC DNA]</scope>
    <source>
        <strain>H70</strain>
    </source>
</reference>
<dbReference type="EC" id="6.1.1.20" evidence="1"/>
<dbReference type="EMBL" id="FM204884">
    <property type="protein sequence ID" value="CAW99592.1"/>
    <property type="molecule type" value="Genomic_DNA"/>
</dbReference>
<dbReference type="SMR" id="C0MH11"/>
<dbReference type="KEGG" id="seq:SZO_11570"/>
<dbReference type="eggNOG" id="COG0016">
    <property type="taxonomic scope" value="Bacteria"/>
</dbReference>
<dbReference type="HOGENOM" id="CLU_025086_0_1_9"/>
<dbReference type="Proteomes" id="UP000001368">
    <property type="component" value="Chromosome"/>
</dbReference>
<dbReference type="GO" id="GO:0005737">
    <property type="term" value="C:cytoplasm"/>
    <property type="evidence" value="ECO:0007669"/>
    <property type="project" value="UniProtKB-SubCell"/>
</dbReference>
<dbReference type="GO" id="GO:0005524">
    <property type="term" value="F:ATP binding"/>
    <property type="evidence" value="ECO:0007669"/>
    <property type="project" value="UniProtKB-UniRule"/>
</dbReference>
<dbReference type="GO" id="GO:0140096">
    <property type="term" value="F:catalytic activity, acting on a protein"/>
    <property type="evidence" value="ECO:0007669"/>
    <property type="project" value="UniProtKB-ARBA"/>
</dbReference>
<dbReference type="GO" id="GO:0000287">
    <property type="term" value="F:magnesium ion binding"/>
    <property type="evidence" value="ECO:0007669"/>
    <property type="project" value="UniProtKB-UniRule"/>
</dbReference>
<dbReference type="GO" id="GO:0004826">
    <property type="term" value="F:phenylalanine-tRNA ligase activity"/>
    <property type="evidence" value="ECO:0007669"/>
    <property type="project" value="UniProtKB-UniRule"/>
</dbReference>
<dbReference type="GO" id="GO:0016740">
    <property type="term" value="F:transferase activity"/>
    <property type="evidence" value="ECO:0007669"/>
    <property type="project" value="UniProtKB-ARBA"/>
</dbReference>
<dbReference type="GO" id="GO:0000049">
    <property type="term" value="F:tRNA binding"/>
    <property type="evidence" value="ECO:0007669"/>
    <property type="project" value="InterPro"/>
</dbReference>
<dbReference type="GO" id="GO:0006432">
    <property type="term" value="P:phenylalanyl-tRNA aminoacylation"/>
    <property type="evidence" value="ECO:0007669"/>
    <property type="project" value="UniProtKB-UniRule"/>
</dbReference>
<dbReference type="CDD" id="cd00496">
    <property type="entry name" value="PheRS_alpha_core"/>
    <property type="match status" value="1"/>
</dbReference>
<dbReference type="FunFam" id="3.30.930.10:FF:000003">
    <property type="entry name" value="Phenylalanine--tRNA ligase alpha subunit"/>
    <property type="match status" value="1"/>
</dbReference>
<dbReference type="Gene3D" id="3.30.930.10">
    <property type="entry name" value="Bira Bifunctional Protein, Domain 2"/>
    <property type="match status" value="1"/>
</dbReference>
<dbReference type="HAMAP" id="MF_00281">
    <property type="entry name" value="Phe_tRNA_synth_alpha1"/>
    <property type="match status" value="1"/>
</dbReference>
<dbReference type="InterPro" id="IPR006195">
    <property type="entry name" value="aa-tRNA-synth_II"/>
</dbReference>
<dbReference type="InterPro" id="IPR045864">
    <property type="entry name" value="aa-tRNA-synth_II/BPL/LPL"/>
</dbReference>
<dbReference type="InterPro" id="IPR004529">
    <property type="entry name" value="Phe-tRNA-synth_IIc_asu"/>
</dbReference>
<dbReference type="InterPro" id="IPR004188">
    <property type="entry name" value="Phe-tRNA_ligase_II_N"/>
</dbReference>
<dbReference type="InterPro" id="IPR022911">
    <property type="entry name" value="Phe_tRNA_ligase_alpha1_bac"/>
</dbReference>
<dbReference type="InterPro" id="IPR002319">
    <property type="entry name" value="Phenylalanyl-tRNA_Synthase"/>
</dbReference>
<dbReference type="InterPro" id="IPR010978">
    <property type="entry name" value="tRNA-bd_arm"/>
</dbReference>
<dbReference type="NCBIfam" id="TIGR00468">
    <property type="entry name" value="pheS"/>
    <property type="match status" value="1"/>
</dbReference>
<dbReference type="PANTHER" id="PTHR11538:SF41">
    <property type="entry name" value="PHENYLALANINE--TRNA LIGASE, MITOCHONDRIAL"/>
    <property type="match status" value="1"/>
</dbReference>
<dbReference type="PANTHER" id="PTHR11538">
    <property type="entry name" value="PHENYLALANYL-TRNA SYNTHETASE"/>
    <property type="match status" value="1"/>
</dbReference>
<dbReference type="Pfam" id="PF02912">
    <property type="entry name" value="Phe_tRNA-synt_N"/>
    <property type="match status" value="1"/>
</dbReference>
<dbReference type="Pfam" id="PF01409">
    <property type="entry name" value="tRNA-synt_2d"/>
    <property type="match status" value="1"/>
</dbReference>
<dbReference type="SUPFAM" id="SSF55681">
    <property type="entry name" value="Class II aaRS and biotin synthetases"/>
    <property type="match status" value="1"/>
</dbReference>
<dbReference type="SUPFAM" id="SSF46589">
    <property type="entry name" value="tRNA-binding arm"/>
    <property type="match status" value="1"/>
</dbReference>
<dbReference type="PROSITE" id="PS50862">
    <property type="entry name" value="AA_TRNA_LIGASE_II"/>
    <property type="match status" value="1"/>
</dbReference>
<evidence type="ECO:0000255" key="1">
    <source>
        <dbReference type="HAMAP-Rule" id="MF_00281"/>
    </source>
</evidence>
<protein>
    <recommendedName>
        <fullName evidence="1">Phenylalanine--tRNA ligase alpha subunit</fullName>
        <ecNumber evidence="1">6.1.1.20</ecNumber>
    </recommendedName>
    <alternativeName>
        <fullName evidence="1">Phenylalanyl-tRNA synthetase alpha subunit</fullName>
        <shortName evidence="1">PheRS</shortName>
    </alternativeName>
</protein>
<feature type="chain" id="PRO_1000204836" description="Phenylalanine--tRNA ligase alpha subunit">
    <location>
        <begin position="1"/>
        <end position="347"/>
    </location>
</feature>
<feature type="binding site" evidence="1">
    <location>
        <position position="261"/>
    </location>
    <ligand>
        <name>Mg(2+)</name>
        <dbReference type="ChEBI" id="CHEBI:18420"/>
        <note>shared with beta subunit</note>
    </ligand>
</feature>
<comment type="catalytic activity">
    <reaction evidence="1">
        <text>tRNA(Phe) + L-phenylalanine + ATP = L-phenylalanyl-tRNA(Phe) + AMP + diphosphate + H(+)</text>
        <dbReference type="Rhea" id="RHEA:19413"/>
        <dbReference type="Rhea" id="RHEA-COMP:9668"/>
        <dbReference type="Rhea" id="RHEA-COMP:9699"/>
        <dbReference type="ChEBI" id="CHEBI:15378"/>
        <dbReference type="ChEBI" id="CHEBI:30616"/>
        <dbReference type="ChEBI" id="CHEBI:33019"/>
        <dbReference type="ChEBI" id="CHEBI:58095"/>
        <dbReference type="ChEBI" id="CHEBI:78442"/>
        <dbReference type="ChEBI" id="CHEBI:78531"/>
        <dbReference type="ChEBI" id="CHEBI:456215"/>
        <dbReference type="EC" id="6.1.1.20"/>
    </reaction>
</comment>
<comment type="cofactor">
    <cofactor evidence="1">
        <name>Mg(2+)</name>
        <dbReference type="ChEBI" id="CHEBI:18420"/>
    </cofactor>
    <text evidence="1">Binds 2 magnesium ions per tetramer.</text>
</comment>
<comment type="subunit">
    <text evidence="1">Tetramer of two alpha and two beta subunits.</text>
</comment>
<comment type="subcellular location">
    <subcellularLocation>
        <location evidence="1">Cytoplasm</location>
    </subcellularLocation>
</comment>
<comment type="similarity">
    <text evidence="1">Belongs to the class-II aminoacyl-tRNA synthetase family. Phe-tRNA synthetase alpha subunit type 1 subfamily.</text>
</comment>
<keyword id="KW-0030">Aminoacyl-tRNA synthetase</keyword>
<keyword id="KW-0067">ATP-binding</keyword>
<keyword id="KW-0963">Cytoplasm</keyword>
<keyword id="KW-0436">Ligase</keyword>
<keyword id="KW-0460">Magnesium</keyword>
<keyword id="KW-0479">Metal-binding</keyword>
<keyword id="KW-0547">Nucleotide-binding</keyword>
<keyword id="KW-0648">Protein biosynthesis</keyword>
<name>SYFA_STRS7</name>
<organism>
    <name type="scientific">Streptococcus equi subsp. zooepidemicus (strain H70)</name>
    <dbReference type="NCBI Taxonomy" id="553483"/>
    <lineage>
        <taxon>Bacteria</taxon>
        <taxon>Bacillati</taxon>
        <taxon>Bacillota</taxon>
        <taxon>Bacilli</taxon>
        <taxon>Lactobacillales</taxon>
        <taxon>Streptococcaceae</taxon>
        <taxon>Streptococcus</taxon>
    </lineage>
</organism>